<organism>
    <name type="scientific">Arabidopsis thaliana</name>
    <name type="common">Mouse-ear cress</name>
    <dbReference type="NCBI Taxonomy" id="3702"/>
    <lineage>
        <taxon>Eukaryota</taxon>
        <taxon>Viridiplantae</taxon>
        <taxon>Streptophyta</taxon>
        <taxon>Embryophyta</taxon>
        <taxon>Tracheophyta</taxon>
        <taxon>Spermatophyta</taxon>
        <taxon>Magnoliopsida</taxon>
        <taxon>eudicotyledons</taxon>
        <taxon>Gunneridae</taxon>
        <taxon>Pentapetalae</taxon>
        <taxon>rosids</taxon>
        <taxon>malvids</taxon>
        <taxon>Brassicales</taxon>
        <taxon>Brassicaceae</taxon>
        <taxon>Camelineae</taxon>
        <taxon>Arabidopsis</taxon>
    </lineage>
</organism>
<accession>Q8LFL4</accession>
<proteinExistence type="evidence at transcript level"/>
<name>CLE25_ARATH</name>
<gene>
    <name evidence="8" type="primary">CLE25</name>
    <name evidence="10" type="ordered locus">At3g28455</name>
    <name evidence="11" type="ORF">MFJ20</name>
</gene>
<reference key="1">
    <citation type="journal article" date="2000" name="DNA Res.">
        <title>Structural analysis of Arabidopsis thaliana chromosome 3. I. Sequence features of the regions of 4,504,864 bp covered by sixty P1 and TAC clones.</title>
        <authorList>
            <person name="Sato S."/>
            <person name="Nakamura Y."/>
            <person name="Kaneko T."/>
            <person name="Katoh T."/>
            <person name="Asamizu E."/>
            <person name="Tabata S."/>
        </authorList>
    </citation>
    <scope>NUCLEOTIDE SEQUENCE [LARGE SCALE GENOMIC DNA]</scope>
    <source>
        <strain>cv. Columbia</strain>
    </source>
</reference>
<reference key="2">
    <citation type="journal article" date="2017" name="Plant J.">
        <title>Araport11: a complete reannotation of the Arabidopsis thaliana reference genome.</title>
        <authorList>
            <person name="Cheng C.Y."/>
            <person name="Krishnakumar V."/>
            <person name="Chan A.P."/>
            <person name="Thibaud-Nissen F."/>
            <person name="Schobel S."/>
            <person name="Town C.D."/>
        </authorList>
    </citation>
    <scope>GENOME REANNOTATION</scope>
    <source>
        <strain>cv. Columbia</strain>
    </source>
</reference>
<reference key="3">
    <citation type="submission" date="2002-03" db="EMBL/GenBank/DDBJ databases">
        <title>Full-length cDNA from Arabidopsis thaliana.</title>
        <authorList>
            <person name="Brover V.V."/>
            <person name="Troukhan M.E."/>
            <person name="Alexandrov N.A."/>
            <person name="Lu Y.-P."/>
            <person name="Flavell R.B."/>
            <person name="Feldmann K.A."/>
        </authorList>
    </citation>
    <scope>NUCLEOTIDE SEQUENCE [LARGE SCALE MRNA]</scope>
</reference>
<reference key="4">
    <citation type="journal article" date="2001" name="Plant Physiol.">
        <title>A large family of genes that share homology with CLAVATA3.</title>
        <authorList>
            <person name="Cock J.M."/>
            <person name="McCormick S."/>
        </authorList>
    </citation>
    <scope>GENE FAMILY</scope>
    <scope>NOMENCLATURE</scope>
</reference>
<reference key="5">
    <citation type="journal article" date="2003" name="Plant Mol. Biol.">
        <title>The Arabidopsis CLV3-like (CLE) genes are expressed in diverse tissues and encode secreted proteins.</title>
        <authorList>
            <person name="Sharma V.K."/>
            <person name="Ramirez J."/>
            <person name="Fletcher J.C."/>
        </authorList>
    </citation>
    <scope>TISSUE SPECIFICITY</scope>
</reference>
<reference key="6">
    <citation type="journal article" date="2006" name="Plant Physiol.">
        <title>Gain-of-function phenotypes of many CLAVATA3/ESR genes, including four new family members, correlate with tandem variations in the conserved CLAVATA3/ESR domain.</title>
        <authorList>
            <person name="Strabala T.J."/>
            <person name="O'donnell P.J."/>
            <person name="Smit A.-M."/>
            <person name="Ampomah-Dwamena C."/>
            <person name="Martin E.J."/>
            <person name="Netzler N."/>
            <person name="Nieuwenhuizen N.J."/>
            <person name="Quinn B.D."/>
            <person name="Foote H.C.C."/>
            <person name="Hudson K.R."/>
        </authorList>
    </citation>
    <scope>FUNCTION</scope>
    <scope>GENE FAMILY</scope>
</reference>
<reference key="7">
    <citation type="journal article" date="2006" name="Science">
        <title>Dodeca-CLE peptides as suppressors of plant stem cell differentiation.</title>
        <authorList>
            <person name="Ito Y."/>
            <person name="Nakanomyo I."/>
            <person name="Motose H."/>
            <person name="Iwamoto K."/>
            <person name="Sawa S."/>
            <person name="Dohmae N."/>
            <person name="Fukuda H."/>
        </authorList>
    </citation>
    <scope>FUNCTION</scope>
</reference>
<reference key="8">
    <citation type="journal article" date="2008" name="Cell. Mol. Life Sci.">
        <title>The CLE family of plant polypeptide signaling molecules.</title>
        <authorList>
            <person name="Jun J.H."/>
            <person name="Fiume E."/>
            <person name="Fletcher J.C."/>
        </authorList>
    </citation>
    <scope>REVIEW</scope>
</reference>
<reference key="9">
    <citation type="journal article" date="2008" name="Curr. Opin. Plant Biol.">
        <title>Diverse and conserved roles of CLE peptides.</title>
        <authorList>
            <person name="Mitchum M.G."/>
            <person name="Wang X."/>
            <person name="Davis E.L."/>
        </authorList>
    </citation>
    <scope>REVIEW</scope>
</reference>
<reference key="10">
    <citation type="journal article" date="2010" name="Protoplasma">
        <title>CLE peptide signaling during plant development.</title>
        <authorList>
            <person name="Wang G."/>
            <person name="Fiers M."/>
        </authorList>
    </citation>
    <scope>REVIEW</scope>
</reference>
<reference key="11">
    <citation type="journal article" date="2017" name="EMBO Rep.">
        <title>Perception of root-active CLE peptides requires CORYNE function in the phloem vasculature.</title>
        <authorList>
            <person name="Hazak O."/>
            <person name="Brandt B."/>
            <person name="Cattaneo P."/>
            <person name="Santiago J."/>
            <person name="Rodriguez-Villalon A."/>
            <person name="Hothorn M."/>
            <person name="Hardtke C.S."/>
        </authorList>
    </citation>
    <scope>FUNCTION</scope>
    <source>
        <strain>cv. Columbia</strain>
    </source>
</reference>
<feature type="signal peptide" evidence="2">
    <location>
        <begin position="1"/>
        <end position="30"/>
    </location>
</feature>
<feature type="chain" id="PRO_0000401275" description="CLAVATA3/ESR (CLE)-related protein 25">
    <location>
        <begin position="31"/>
        <end position="81"/>
    </location>
</feature>
<feature type="peptide" id="PRO_0000401276" description="CLE25p" evidence="1">
    <location>
        <begin position="58"/>
        <end position="69"/>
    </location>
</feature>
<feature type="region of interest" description="Disordered" evidence="3">
    <location>
        <begin position="57"/>
        <end position="81"/>
    </location>
</feature>
<feature type="compositionally biased region" description="Basic and acidic residues" evidence="3">
    <location>
        <begin position="67"/>
        <end position="81"/>
    </location>
</feature>
<feature type="modified residue" description="Hydroxyproline" evidence="1">
    <location>
        <position position="61"/>
    </location>
</feature>
<feature type="modified residue" description="Hydroxyproline" evidence="1">
    <location>
        <position position="64"/>
    </location>
</feature>
<feature type="glycosylation site" description="O-linked (Ara...) hydroxyproline" evidence="1">
    <location>
        <position position="64"/>
    </location>
</feature>
<evidence type="ECO:0000250" key="1">
    <source>
        <dbReference type="UniProtKB" id="O49519"/>
    </source>
</evidence>
<evidence type="ECO:0000255" key="2"/>
<evidence type="ECO:0000256" key="3">
    <source>
        <dbReference type="SAM" id="MobiDB-lite"/>
    </source>
</evidence>
<evidence type="ECO:0000269" key="4">
    <source>
    </source>
</evidence>
<evidence type="ECO:0000269" key="5">
    <source>
    </source>
</evidence>
<evidence type="ECO:0000269" key="6">
    <source>
    </source>
</evidence>
<evidence type="ECO:0000269" key="7">
    <source>
    </source>
</evidence>
<evidence type="ECO:0000303" key="8">
    <source>
    </source>
</evidence>
<evidence type="ECO:0000305" key="9"/>
<evidence type="ECO:0000312" key="10">
    <source>
        <dbReference type="Araport" id="AT3G28455"/>
    </source>
</evidence>
<evidence type="ECO:0000312" key="11">
    <source>
        <dbReference type="EMBL" id="AB026644"/>
    </source>
</evidence>
<dbReference type="EMBL" id="AB026644">
    <property type="status" value="NOT_ANNOTATED_CDS"/>
    <property type="molecule type" value="Genomic_DNA"/>
</dbReference>
<dbReference type="EMBL" id="CP002686">
    <property type="protein sequence ID" value="AEE77447.1"/>
    <property type="molecule type" value="Genomic_DNA"/>
</dbReference>
<dbReference type="EMBL" id="AY084776">
    <property type="protein sequence ID" value="AAM61344.1"/>
    <property type="molecule type" value="mRNA"/>
</dbReference>
<dbReference type="RefSeq" id="NP_683600.1">
    <property type="nucleotide sequence ID" value="NM_148758.2"/>
</dbReference>
<dbReference type="SMR" id="Q8LFL4"/>
<dbReference type="FunCoup" id="Q8LFL4">
    <property type="interactions" value="450"/>
</dbReference>
<dbReference type="STRING" id="3702.Q8LFL4"/>
<dbReference type="GlyCosmos" id="Q8LFL4">
    <property type="glycosylation" value="1 site, No reported glycans"/>
</dbReference>
<dbReference type="PaxDb" id="3702-AT3G28455.1"/>
<dbReference type="EnsemblPlants" id="AT3G28455.1">
    <property type="protein sequence ID" value="AT3G28455.1"/>
    <property type="gene ID" value="AT3G28455"/>
</dbReference>
<dbReference type="GeneID" id="822475"/>
<dbReference type="Gramene" id="AT3G28455.1">
    <property type="protein sequence ID" value="AT3G28455.1"/>
    <property type="gene ID" value="AT3G28455"/>
</dbReference>
<dbReference type="KEGG" id="ath:AT3G28455"/>
<dbReference type="Araport" id="AT3G28455"/>
<dbReference type="TAIR" id="AT3G28455">
    <property type="gene designation" value="CLE25"/>
</dbReference>
<dbReference type="eggNOG" id="ENOG502R1RB">
    <property type="taxonomic scope" value="Eukaryota"/>
</dbReference>
<dbReference type="HOGENOM" id="CLU_163620_0_0_1"/>
<dbReference type="InParanoid" id="Q8LFL4"/>
<dbReference type="OMA" id="GIISNHH"/>
<dbReference type="PhylomeDB" id="Q8LFL4"/>
<dbReference type="PRO" id="PR:Q8LFL4"/>
<dbReference type="Proteomes" id="UP000006548">
    <property type="component" value="Chromosome 3"/>
</dbReference>
<dbReference type="ExpressionAtlas" id="Q8LFL4">
    <property type="expression patterns" value="baseline and differential"/>
</dbReference>
<dbReference type="GO" id="GO:0048046">
    <property type="term" value="C:apoplast"/>
    <property type="evidence" value="ECO:0000255"/>
    <property type="project" value="TAIR"/>
</dbReference>
<dbReference type="GO" id="GO:0033612">
    <property type="term" value="F:receptor serine/threonine kinase binding"/>
    <property type="evidence" value="ECO:0000353"/>
    <property type="project" value="UniProtKB"/>
</dbReference>
<dbReference type="GO" id="GO:0045168">
    <property type="term" value="P:cell-cell signaling involved in cell fate commitment"/>
    <property type="evidence" value="ECO:0000250"/>
    <property type="project" value="UniProtKB"/>
</dbReference>
<dbReference type="GO" id="GO:0010078">
    <property type="term" value="P:maintenance of root meristem identity"/>
    <property type="evidence" value="ECO:0000314"/>
    <property type="project" value="UniProtKB"/>
</dbReference>
<dbReference type="GO" id="GO:0010088">
    <property type="term" value="P:phloem development"/>
    <property type="evidence" value="ECO:0000314"/>
    <property type="project" value="UniProtKB"/>
</dbReference>
<dbReference type="GO" id="GO:0010116">
    <property type="term" value="P:positive regulation of abscisic acid biosynthetic process"/>
    <property type="evidence" value="ECO:0000316"/>
    <property type="project" value="TAIR"/>
</dbReference>
<dbReference type="GO" id="GO:1902584">
    <property type="term" value="P:positive regulation of response to water deprivation"/>
    <property type="evidence" value="ECO:0000315"/>
    <property type="project" value="TAIR"/>
</dbReference>
<dbReference type="GO" id="GO:0045595">
    <property type="term" value="P:regulation of cell differentiation"/>
    <property type="evidence" value="ECO:0000314"/>
    <property type="project" value="UniProtKB"/>
</dbReference>
<dbReference type="InterPro" id="IPR039316">
    <property type="entry name" value="CLE25/26"/>
</dbReference>
<dbReference type="PANTHER" id="PTHR34277">
    <property type="entry name" value="CLAVATA3/ESR (CLE)-RELATED PROTEIN 26"/>
    <property type="match status" value="1"/>
</dbReference>
<dbReference type="PANTHER" id="PTHR34277:SF18">
    <property type="entry name" value="CLAVATA3_ESR (CLE)-RELATED PROTEIN 25"/>
    <property type="match status" value="1"/>
</dbReference>
<comment type="function">
    <molecule>CLE25p</molecule>
    <text evidence="5 6 7">Extracellular signal peptide that regulates cell fate. Represses root apical meristem maintenance. Regulates the transition of protophloem cells from proliferation to differentiation, thus impinging on postembryonic growth capacity of the root meristem; this signaling pathway requires CRN and CLV2 (PubMed:28607033).</text>
</comment>
<comment type="subcellular location">
    <molecule>CLE25p</molecule>
    <subcellularLocation>
        <location evidence="1">Secreted</location>
        <location evidence="1">Extracellular space</location>
    </subcellularLocation>
</comment>
<comment type="tissue specificity">
    <molecule>CLE25p</molecule>
    <text evidence="4">Mostly expressed in flowers and siliques, and, to a lower extent, in roots, stems, apex, seedlings, leaves and pollen.</text>
</comment>
<comment type="PTM">
    <molecule>CLE25p</molecule>
    <text evidence="1">The O-glycosylation (arabinosylation) of the hydroxyproline Pro-64 enhances binding affinity of the CLE25p peptide for its receptor.</text>
</comment>
<comment type="similarity">
    <text evidence="9">Belongs to the CLV3/ESR signal peptide family.</text>
</comment>
<keyword id="KW-0217">Developmental protein</keyword>
<keyword id="KW-0221">Differentiation</keyword>
<keyword id="KW-0325">Glycoprotein</keyword>
<keyword id="KW-0379">Hydroxylation</keyword>
<keyword id="KW-1185">Reference proteome</keyword>
<keyword id="KW-0964">Secreted</keyword>
<keyword id="KW-0732">Signal</keyword>
<sequence>MGGNGIRALVGVIASLGLIVFLLVGILANSAPSVPSSENVKTLRFSGKDVNLFHVSKRKVPNGPDPIHNRKAETSRRPPRV</sequence>
<protein>
    <recommendedName>
        <fullName evidence="8">CLAVATA3/ESR (CLE)-related protein 25</fullName>
    </recommendedName>
    <component>
        <recommendedName>
            <fullName evidence="8">CLE25p</fullName>
        </recommendedName>
    </component>
</protein>